<sequence length="705" mass="80205">MWLLYLLVPALFCRAGGSIPIPQKLFGEVTSPLFPKPYPNNFETTTVITVPTGYRVKLVFQQFDLEPSEGCFYDYVKISADKKSLGRFCGQLGSPLGNPPGKKEFMSQGNKMLLTFHTDFSNEENGTIMFYKGFLAYYQAVDLDECASRSKSGEEDPQPQCQHLCHNYVGGYFCSCRPGYELQKDRHSCQAECSSELYTEASGYISSLEYPRSYPPDLRCNYSIRVERGLTLHLKFLEPFDIDDHQQVHCPYDQLQIYANGKNIGEFCGKQRPPDLDTSSNAVDLLFFTDESGDSRGWKLRYTTEIIKCPQPKTLDEFTIIQNLQPQYQFRDYFIATCKQGYQLIEGKQVLHSFTAVCQDDGTWHRAMPRCKIKDCGQPRNLPNGDFRYTTTMGVNTYKARIQYYCHETYYKMQTRAGSRESEQGVYTCTAQGIWKNEQKGEKIPRCLPVCGKPVNPVEQRQRIIGGQKAKMGNFPWQVFTNIHGRGGGALLGDRWILTAAHTLYPKEHEAQSNASLDVFLGHTNVEELMKLGNHPIRRVSVHPDYRQDESYNFEGDIALLELENSVTLGPNLLPICLPDNETFYDLGLMGYVSGFGVMEEKIAHDLRFVRLPVANPQACENWLRGKNRMDVFSQNMFCAGHPSLKQDACQGDSGGVFAVRDPNTDRWVATGIVSWGIGCSRGYGFYTKVLNYVDWIKKEMEEED</sequence>
<dbReference type="EC" id="3.4.21.41" evidence="1"/>
<dbReference type="EMBL" id="AB188284">
    <property type="protein sequence ID" value="BAD74035.1"/>
    <property type="molecule type" value="mRNA"/>
</dbReference>
<dbReference type="RefSeq" id="NP_001029292.1">
    <property type="nucleotide sequence ID" value="NM_001034120.1"/>
</dbReference>
<dbReference type="SMR" id="Q5R1W3"/>
<dbReference type="FunCoup" id="Q5R1W3">
    <property type="interactions" value="435"/>
</dbReference>
<dbReference type="STRING" id="9598.ENSPTRP00000054792"/>
<dbReference type="MEROPS" id="S01.192"/>
<dbReference type="GlyCosmos" id="Q5R1W3">
    <property type="glycosylation" value="4 sites, No reported glycans"/>
</dbReference>
<dbReference type="PaxDb" id="9598-ENSPTRP00000054792"/>
<dbReference type="GeneID" id="466939"/>
<dbReference type="KEGG" id="ptr:466939"/>
<dbReference type="CTD" id="715"/>
<dbReference type="eggNOG" id="KOG3627">
    <property type="taxonomic scope" value="Eukaryota"/>
</dbReference>
<dbReference type="InParanoid" id="Q5R1W3"/>
<dbReference type="Proteomes" id="UP000002277">
    <property type="component" value="Unplaced"/>
</dbReference>
<dbReference type="GO" id="GO:0072562">
    <property type="term" value="C:blood microparticle"/>
    <property type="evidence" value="ECO:0000318"/>
    <property type="project" value="GO_Central"/>
</dbReference>
<dbReference type="GO" id="GO:0005615">
    <property type="term" value="C:extracellular space"/>
    <property type="evidence" value="ECO:0000318"/>
    <property type="project" value="GO_Central"/>
</dbReference>
<dbReference type="GO" id="GO:0005509">
    <property type="term" value="F:calcium ion binding"/>
    <property type="evidence" value="ECO:0007669"/>
    <property type="project" value="InterPro"/>
</dbReference>
<dbReference type="GO" id="GO:0004252">
    <property type="term" value="F:serine-type endopeptidase activity"/>
    <property type="evidence" value="ECO:0000318"/>
    <property type="project" value="GO_Central"/>
</dbReference>
<dbReference type="GO" id="GO:0006958">
    <property type="term" value="P:complement activation, classical pathway"/>
    <property type="evidence" value="ECO:0007669"/>
    <property type="project" value="UniProtKB-KW"/>
</dbReference>
<dbReference type="GO" id="GO:0045087">
    <property type="term" value="P:innate immune response"/>
    <property type="evidence" value="ECO:0007669"/>
    <property type="project" value="UniProtKB-KW"/>
</dbReference>
<dbReference type="GO" id="GO:0031638">
    <property type="term" value="P:zymogen activation"/>
    <property type="evidence" value="ECO:0000318"/>
    <property type="project" value="GO_Central"/>
</dbReference>
<dbReference type="CDD" id="cd00033">
    <property type="entry name" value="CCP"/>
    <property type="match status" value="2"/>
</dbReference>
<dbReference type="CDD" id="cd00041">
    <property type="entry name" value="CUB"/>
    <property type="match status" value="2"/>
</dbReference>
<dbReference type="CDD" id="cd00054">
    <property type="entry name" value="EGF_CA"/>
    <property type="match status" value="1"/>
</dbReference>
<dbReference type="CDD" id="cd00190">
    <property type="entry name" value="Tryp_SPc"/>
    <property type="match status" value="1"/>
</dbReference>
<dbReference type="FunFam" id="2.10.25.10:FF:000419">
    <property type="entry name" value="Complement C1r subcomponent"/>
    <property type="match status" value="1"/>
</dbReference>
<dbReference type="FunFam" id="2.10.70.10:FF:000040">
    <property type="entry name" value="Complement C1r subcomponent"/>
    <property type="match status" value="1"/>
</dbReference>
<dbReference type="FunFam" id="2.40.10.10:FF:000037">
    <property type="entry name" value="Complement C1r subcomponent"/>
    <property type="match status" value="1"/>
</dbReference>
<dbReference type="FunFam" id="2.40.10.10:FF:000054">
    <property type="entry name" value="Complement C1r subcomponent"/>
    <property type="match status" value="1"/>
</dbReference>
<dbReference type="FunFam" id="2.60.120.290:FF:000028">
    <property type="entry name" value="Complement C1r subcomponent"/>
    <property type="match status" value="1"/>
</dbReference>
<dbReference type="FunFam" id="2.10.70.10:FF:000016">
    <property type="entry name" value="Mannan-binding lectin serine protease 1"/>
    <property type="match status" value="1"/>
</dbReference>
<dbReference type="FunFam" id="2.60.120.290:FF:000006">
    <property type="entry name" value="Mannan-binding lectin serine protease 1"/>
    <property type="match status" value="1"/>
</dbReference>
<dbReference type="Gene3D" id="2.10.70.10">
    <property type="entry name" value="Complement Module, domain 1"/>
    <property type="match status" value="2"/>
</dbReference>
<dbReference type="Gene3D" id="2.10.25.10">
    <property type="entry name" value="Laminin"/>
    <property type="match status" value="1"/>
</dbReference>
<dbReference type="Gene3D" id="2.60.120.290">
    <property type="entry name" value="Spermadhesin, CUB domain"/>
    <property type="match status" value="2"/>
</dbReference>
<dbReference type="Gene3D" id="2.40.10.10">
    <property type="entry name" value="Trypsin-like serine proteases"/>
    <property type="match status" value="3"/>
</dbReference>
<dbReference type="InterPro" id="IPR000859">
    <property type="entry name" value="CUB_dom"/>
</dbReference>
<dbReference type="InterPro" id="IPR001881">
    <property type="entry name" value="EGF-like_Ca-bd_dom"/>
</dbReference>
<dbReference type="InterPro" id="IPR000742">
    <property type="entry name" value="EGF-like_dom"/>
</dbReference>
<dbReference type="InterPro" id="IPR018097">
    <property type="entry name" value="EGF_Ca-bd_CS"/>
</dbReference>
<dbReference type="InterPro" id="IPR024175">
    <property type="entry name" value="Pept_S1A_C1r/C1S/mannan-bd"/>
</dbReference>
<dbReference type="InterPro" id="IPR009003">
    <property type="entry name" value="Peptidase_S1_PA"/>
</dbReference>
<dbReference type="InterPro" id="IPR043504">
    <property type="entry name" value="Peptidase_S1_PA_chymotrypsin"/>
</dbReference>
<dbReference type="InterPro" id="IPR001314">
    <property type="entry name" value="Peptidase_S1A"/>
</dbReference>
<dbReference type="InterPro" id="IPR035914">
    <property type="entry name" value="Sperma_CUB_dom_sf"/>
</dbReference>
<dbReference type="InterPro" id="IPR035976">
    <property type="entry name" value="Sushi/SCR/CCP_sf"/>
</dbReference>
<dbReference type="InterPro" id="IPR000436">
    <property type="entry name" value="Sushi_SCR_CCP_dom"/>
</dbReference>
<dbReference type="InterPro" id="IPR001254">
    <property type="entry name" value="Trypsin_dom"/>
</dbReference>
<dbReference type="InterPro" id="IPR033116">
    <property type="entry name" value="TRYPSIN_SER"/>
</dbReference>
<dbReference type="PANTHER" id="PTHR24255:SF25">
    <property type="entry name" value="COMPLEMENT C1R SUBCOMPONENT"/>
    <property type="match status" value="1"/>
</dbReference>
<dbReference type="PANTHER" id="PTHR24255">
    <property type="entry name" value="COMPLEMENT COMPONENT 1, S SUBCOMPONENT-RELATED"/>
    <property type="match status" value="1"/>
</dbReference>
<dbReference type="Pfam" id="PF00431">
    <property type="entry name" value="CUB"/>
    <property type="match status" value="2"/>
</dbReference>
<dbReference type="Pfam" id="PF14670">
    <property type="entry name" value="FXa_inhibition"/>
    <property type="match status" value="1"/>
</dbReference>
<dbReference type="Pfam" id="PF00084">
    <property type="entry name" value="Sushi"/>
    <property type="match status" value="2"/>
</dbReference>
<dbReference type="Pfam" id="PF00089">
    <property type="entry name" value="Trypsin"/>
    <property type="match status" value="1"/>
</dbReference>
<dbReference type="PIRSF" id="PIRSF001155">
    <property type="entry name" value="C1r_C1s_MASP"/>
    <property type="match status" value="1"/>
</dbReference>
<dbReference type="PRINTS" id="PR00722">
    <property type="entry name" value="CHYMOTRYPSIN"/>
</dbReference>
<dbReference type="SMART" id="SM00032">
    <property type="entry name" value="CCP"/>
    <property type="match status" value="2"/>
</dbReference>
<dbReference type="SMART" id="SM00042">
    <property type="entry name" value="CUB"/>
    <property type="match status" value="2"/>
</dbReference>
<dbReference type="SMART" id="SM00181">
    <property type="entry name" value="EGF"/>
    <property type="match status" value="1"/>
</dbReference>
<dbReference type="SMART" id="SM00179">
    <property type="entry name" value="EGF_CA"/>
    <property type="match status" value="1"/>
</dbReference>
<dbReference type="SMART" id="SM00020">
    <property type="entry name" value="Tryp_SPc"/>
    <property type="match status" value="1"/>
</dbReference>
<dbReference type="SUPFAM" id="SSF57535">
    <property type="entry name" value="Complement control module/SCR domain"/>
    <property type="match status" value="2"/>
</dbReference>
<dbReference type="SUPFAM" id="SSF57196">
    <property type="entry name" value="EGF/Laminin"/>
    <property type="match status" value="1"/>
</dbReference>
<dbReference type="SUPFAM" id="SSF49854">
    <property type="entry name" value="Spermadhesin, CUB domain"/>
    <property type="match status" value="2"/>
</dbReference>
<dbReference type="SUPFAM" id="SSF50494">
    <property type="entry name" value="Trypsin-like serine proteases"/>
    <property type="match status" value="1"/>
</dbReference>
<dbReference type="PROSITE" id="PS00010">
    <property type="entry name" value="ASX_HYDROXYL"/>
    <property type="match status" value="1"/>
</dbReference>
<dbReference type="PROSITE" id="PS01180">
    <property type="entry name" value="CUB"/>
    <property type="match status" value="2"/>
</dbReference>
<dbReference type="PROSITE" id="PS01186">
    <property type="entry name" value="EGF_2"/>
    <property type="match status" value="1"/>
</dbReference>
<dbReference type="PROSITE" id="PS01187">
    <property type="entry name" value="EGF_CA"/>
    <property type="match status" value="1"/>
</dbReference>
<dbReference type="PROSITE" id="PS50923">
    <property type="entry name" value="SUSHI"/>
    <property type="match status" value="2"/>
</dbReference>
<dbReference type="PROSITE" id="PS50240">
    <property type="entry name" value="TRYPSIN_DOM"/>
    <property type="match status" value="1"/>
</dbReference>
<dbReference type="PROSITE" id="PS00135">
    <property type="entry name" value="TRYPSIN_SER"/>
    <property type="match status" value="1"/>
</dbReference>
<name>C1R_PANTR</name>
<protein>
    <recommendedName>
        <fullName>Complement C1r subcomponent</fullName>
        <ecNumber evidence="1">3.4.21.41</ecNumber>
    </recommendedName>
    <alternativeName>
        <fullName>Complement component 1 subcomponent r</fullName>
    </alternativeName>
    <component>
        <recommendedName>
            <fullName>Complement C1r subcomponent heavy chain</fullName>
        </recommendedName>
    </component>
    <component>
        <recommendedName>
            <fullName>Complement C1r subcomponent light chain</fullName>
        </recommendedName>
    </component>
</protein>
<gene>
    <name type="primary">C1R</name>
</gene>
<accession>Q5R1W3</accession>
<feature type="signal peptide" evidence="1">
    <location>
        <begin position="1"/>
        <end position="17"/>
    </location>
</feature>
<feature type="chain" id="PRO_0000027583" description="Complement C1r subcomponent">
    <location>
        <begin position="18"/>
        <end position="705"/>
    </location>
</feature>
<feature type="chain" id="PRO_0000027584" description="Complement C1r subcomponent heavy chain" evidence="1">
    <location>
        <begin position="18"/>
        <end position="463"/>
    </location>
</feature>
<feature type="chain" id="PRO_0000027585" description="Complement C1r subcomponent light chain" evidence="1">
    <location>
        <begin position="464"/>
        <end position="705"/>
    </location>
</feature>
<feature type="domain" description="CUB 1" evidence="3">
    <location>
        <begin position="18"/>
        <end position="141"/>
    </location>
</feature>
<feature type="domain" description="EGF-like; calcium-binding" evidence="2">
    <location>
        <begin position="142"/>
        <end position="190"/>
    </location>
</feature>
<feature type="domain" description="CUB 2" evidence="3">
    <location>
        <begin position="193"/>
        <end position="305"/>
    </location>
</feature>
<feature type="domain" description="Sushi 1" evidence="5">
    <location>
        <begin position="307"/>
        <end position="373"/>
    </location>
</feature>
<feature type="domain" description="Sushi 2" evidence="5">
    <location>
        <begin position="374"/>
        <end position="449"/>
    </location>
</feature>
<feature type="domain" description="Peptidase S1" evidence="4">
    <location>
        <begin position="464"/>
        <end position="702"/>
    </location>
</feature>
<feature type="active site" description="Charge relay system" evidence="1">
    <location>
        <position position="502"/>
    </location>
</feature>
<feature type="active site" description="Charge relay system" evidence="1">
    <location>
        <position position="557"/>
    </location>
</feature>
<feature type="active site" description="Charge relay system" evidence="1">
    <location>
        <position position="654"/>
    </location>
</feature>
<feature type="binding site" evidence="1">
    <location>
        <position position="66"/>
    </location>
    <ligand>
        <name>Ca(2+)</name>
        <dbReference type="ChEBI" id="CHEBI:29108"/>
        <label>1</label>
    </ligand>
</feature>
<feature type="binding site" evidence="1">
    <location>
        <position position="74"/>
    </location>
    <ligand>
        <name>Ca(2+)</name>
        <dbReference type="ChEBI" id="CHEBI:29108"/>
        <label>1</label>
    </ligand>
</feature>
<feature type="binding site" evidence="1">
    <location>
        <position position="119"/>
    </location>
    <ligand>
        <name>Ca(2+)</name>
        <dbReference type="ChEBI" id="CHEBI:29108"/>
        <label>1</label>
    </ligand>
</feature>
<feature type="binding site" evidence="1">
    <location>
        <position position="142"/>
    </location>
    <ligand>
        <name>Ca(2+)</name>
        <dbReference type="ChEBI" id="CHEBI:29108"/>
        <label>2</label>
    </ligand>
</feature>
<feature type="binding site" evidence="1">
    <location>
        <position position="143"/>
    </location>
    <ligand>
        <name>Ca(2+)</name>
        <dbReference type="ChEBI" id="CHEBI:29108"/>
        <label>2</label>
    </ligand>
</feature>
<feature type="binding site" evidence="1">
    <location>
        <position position="145"/>
    </location>
    <ligand>
        <name>Ca(2+)</name>
        <dbReference type="ChEBI" id="CHEBI:29108"/>
        <label>2</label>
    </ligand>
</feature>
<feature type="binding site" evidence="1">
    <location>
        <position position="167"/>
    </location>
    <ligand>
        <name>Ca(2+)</name>
        <dbReference type="ChEBI" id="CHEBI:29108"/>
        <label>2</label>
    </ligand>
</feature>
<feature type="binding site" evidence="1">
    <location>
        <position position="168"/>
    </location>
    <ligand>
        <name>Ca(2+)</name>
        <dbReference type="ChEBI" id="CHEBI:29108"/>
        <label>2</label>
    </ligand>
</feature>
<feature type="binding site" evidence="1">
    <location>
        <position position="171"/>
    </location>
    <ligand>
        <name>Ca(2+)</name>
        <dbReference type="ChEBI" id="CHEBI:29108"/>
        <label>2</label>
    </ligand>
</feature>
<feature type="binding site" evidence="1">
    <location>
        <position position="243"/>
    </location>
    <ligand>
        <name>Ca(2+)</name>
        <dbReference type="ChEBI" id="CHEBI:29108"/>
        <label>3</label>
    </ligand>
</feature>
<feature type="binding site" evidence="1">
    <location>
        <position position="253"/>
    </location>
    <ligand>
        <name>Ca(2+)</name>
        <dbReference type="ChEBI" id="CHEBI:29108"/>
        <label>3</label>
    </ligand>
</feature>
<feature type="binding site" evidence="1">
    <location>
        <position position="290"/>
    </location>
    <ligand>
        <name>Ca(2+)</name>
        <dbReference type="ChEBI" id="CHEBI:29108"/>
        <label>3</label>
    </ligand>
</feature>
<feature type="binding site" evidence="1">
    <location>
        <position position="294"/>
    </location>
    <ligand>
        <name>Ca(2+)</name>
        <dbReference type="ChEBI" id="CHEBI:29108"/>
        <label>3</label>
    </ligand>
</feature>
<feature type="site" description="Cleavage; by autolysis" evidence="1">
    <location>
        <begin position="463"/>
        <end position="464"/>
    </location>
</feature>
<feature type="modified residue" description="(3R)-3-hydroxyasparagine" evidence="1">
    <location>
        <position position="167"/>
    </location>
</feature>
<feature type="modified residue" description="Phosphoserine; by CK2" evidence="1">
    <location>
        <position position="206"/>
    </location>
</feature>
<feature type="glycosylation site" description="N-linked (GlcNAc...) asparagine" evidence="2">
    <location>
        <position position="125"/>
    </location>
</feature>
<feature type="glycosylation site" description="N-linked (GlcNAc...) asparagine" evidence="2">
    <location>
        <position position="221"/>
    </location>
</feature>
<feature type="glycosylation site" description="N-linked (GlcNAc...) asparagine" evidence="2">
    <location>
        <position position="514"/>
    </location>
</feature>
<feature type="glycosylation site" description="N-linked (GlcNAc...) asparagine" evidence="2">
    <location>
        <position position="581"/>
    </location>
</feature>
<feature type="disulfide bond" evidence="1">
    <location>
        <begin position="71"/>
        <end position="89"/>
    </location>
</feature>
<feature type="disulfide bond" evidence="1">
    <location>
        <begin position="146"/>
        <end position="165"/>
    </location>
</feature>
<feature type="disulfide bond" evidence="1">
    <location>
        <begin position="161"/>
        <end position="174"/>
    </location>
</feature>
<feature type="disulfide bond" evidence="1">
    <location>
        <begin position="176"/>
        <end position="189"/>
    </location>
</feature>
<feature type="disulfide bond" evidence="1">
    <location>
        <begin position="193"/>
        <end position="220"/>
    </location>
</feature>
<feature type="disulfide bond" evidence="1">
    <location>
        <begin position="250"/>
        <end position="268"/>
    </location>
</feature>
<feature type="disulfide bond" evidence="1">
    <location>
        <begin position="309"/>
        <end position="358"/>
    </location>
</feature>
<feature type="disulfide bond" evidence="1">
    <location>
        <begin position="338"/>
        <end position="371"/>
    </location>
</feature>
<feature type="disulfide bond" evidence="1">
    <location>
        <begin position="376"/>
        <end position="429"/>
    </location>
</feature>
<feature type="disulfide bond" evidence="1">
    <location>
        <begin position="406"/>
        <end position="447"/>
    </location>
</feature>
<feature type="disulfide bond" description="Interchain (between heavy and light chains)" evidence="3 4 5">
    <location>
        <begin position="451"/>
        <end position="577"/>
    </location>
</feature>
<feature type="disulfide bond" evidence="1">
    <location>
        <begin position="620"/>
        <end position="639"/>
    </location>
</feature>
<feature type="disulfide bond" evidence="1">
    <location>
        <begin position="650"/>
        <end position="680"/>
    </location>
</feature>
<proteinExistence type="evidence at transcript level"/>
<reference key="1">
    <citation type="submission" date="2004-08" db="EMBL/GenBank/DDBJ databases">
        <authorList>
            <person name="Hirai M."/>
            <person name="Sakate R."/>
            <person name="Hida M."/>
            <person name="Sugano S."/>
            <person name="Hayasaka I."/>
            <person name="Suto Y."/>
            <person name="Osada N."/>
            <person name="Hashimoto K."/>
        </authorList>
    </citation>
    <scope>NUCLEOTIDE SEQUENCE [MRNA]</scope>
    <source>
        <tissue>Skin</tissue>
    </source>
</reference>
<keyword id="KW-0068">Autocatalytic cleavage</keyword>
<keyword id="KW-0106">Calcium</keyword>
<keyword id="KW-0180">Complement pathway</keyword>
<keyword id="KW-1015">Disulfide bond</keyword>
<keyword id="KW-0245">EGF-like domain</keyword>
<keyword id="KW-0325">Glycoprotein</keyword>
<keyword id="KW-0378">Hydrolase</keyword>
<keyword id="KW-0379">Hydroxylation</keyword>
<keyword id="KW-0391">Immunity</keyword>
<keyword id="KW-0399">Innate immunity</keyword>
<keyword id="KW-0479">Metal-binding</keyword>
<keyword id="KW-0597">Phosphoprotein</keyword>
<keyword id="KW-0645">Protease</keyword>
<keyword id="KW-1185">Reference proteome</keyword>
<keyword id="KW-0677">Repeat</keyword>
<keyword id="KW-0964">Secreted</keyword>
<keyword id="KW-0720">Serine protease</keyword>
<keyword id="KW-0732">Signal</keyword>
<keyword id="KW-0768">Sushi</keyword>
<organism>
    <name type="scientific">Pan troglodytes</name>
    <name type="common">Chimpanzee</name>
    <dbReference type="NCBI Taxonomy" id="9598"/>
    <lineage>
        <taxon>Eukaryota</taxon>
        <taxon>Metazoa</taxon>
        <taxon>Chordata</taxon>
        <taxon>Craniata</taxon>
        <taxon>Vertebrata</taxon>
        <taxon>Euteleostomi</taxon>
        <taxon>Mammalia</taxon>
        <taxon>Eutheria</taxon>
        <taxon>Euarchontoglires</taxon>
        <taxon>Primates</taxon>
        <taxon>Haplorrhini</taxon>
        <taxon>Catarrhini</taxon>
        <taxon>Hominidae</taxon>
        <taxon>Pan</taxon>
    </lineage>
</organism>
<evidence type="ECO:0000250" key="1">
    <source>
        <dbReference type="UniProtKB" id="P00736"/>
    </source>
</evidence>
<evidence type="ECO:0000255" key="2"/>
<evidence type="ECO:0000255" key="3">
    <source>
        <dbReference type="PROSITE-ProRule" id="PRU00059"/>
    </source>
</evidence>
<evidence type="ECO:0000255" key="4">
    <source>
        <dbReference type="PROSITE-ProRule" id="PRU00274"/>
    </source>
</evidence>
<evidence type="ECO:0000255" key="5">
    <source>
        <dbReference type="PROSITE-ProRule" id="PRU00302"/>
    </source>
</evidence>
<comment type="function">
    <text evidence="1">Serine protease component of the complement C1 complex, a multiprotein complex that initiates the classical pathway of the complement system, a cascade of proteins that leads to phagocytosis and breakdown of pathogens and signaling that strengthens the adaptive immune system. C1R catalyzes the first enzymatic step in the classical complement pathway: it is activated by the C1Q subcomplex of the C1 complex, which associates with IgG or IgM immunoglobulins complexed with antigens to form antigen-antibody complexes on the surface of pathogens. Immunoglobulin-binding promotes the autocatalytic cleavage and activation of C1R. Activated C1R then cleaves and activates C1S, the second protease of the classical complement pathway. It is unclear if C1R activates C1S within single, strained C1 complexes or between neighboring C1 complexes on surfaces.</text>
</comment>
<comment type="catalytic activity">
    <reaction evidence="1">
        <text>Selective cleavage of Lys(or Arg)-|-Ile bond in complement subcomponent C1s to form the active form of C1s (EC 3.4.21.42).</text>
        <dbReference type="EC" id="3.4.21.41"/>
    </reaction>
</comment>
<comment type="activity regulation">
    <text evidence="1">Activated by the C1Q subcomplex of the C1 complex following C1Q binding to immunoglobulins (IgG or IgM) complexed with antigens to form antigen-antibody complexes on the surface of pathogens. Immunoglobulin-binding promotes autoactivation of C1R, which results in the cleavage of the Arg-Ile bond in the catalytic domain.</text>
</comment>
<comment type="subunit">
    <text evidence="1">Core component of the complement C1 complex, a calcium-dependent complex composed of 1 molecule of the C1Q subcomplex, 2 molecules of C1R and 2 molecules of C1S. The C1Q subcomplex is composed 18 subunits: 3 chains of C1QA, C1QB, and C1QC trimerize to form 6 collagen-like triple helices connected to six globular ligand-recognition modules. Within the C1 complex, C1R is a dimer of identical chains, each of which is activated by cleavage into two chains, heavy and light, connected by disulfide bonds.</text>
</comment>
<comment type="subcellular location">
    <subcellularLocation>
        <location evidence="1">Secreted</location>
    </subcellularLocation>
    <subcellularLocation>
        <location evidence="1">Cell surface</location>
    </subcellularLocation>
    <text evidence="1">Recruited to the surface of pathogens by the C1Q subcomplex.</text>
</comment>
<comment type="domain">
    <text evidence="1">The CUB domain 2 shows a compact folded structure in the presence of Ca(2+), whereas it has a flexible, disordered conformation in the absence of Ca(2+). Ca(2+) could provide a switch between the folded and disordered forms; low Ca(2+) could provide flexibility to promote autoprocessing and activation of CIR.</text>
</comment>
<comment type="PTM">
    <text evidence="1">Cleaved and activated by autocatalytic processing to generate Complement C1r subcomponent heavy and light chains that are connected by disulfide bonds.</text>
</comment>
<comment type="PTM">
    <text evidence="1">The iron and 2-oxoglutarate dependent 3-hydroxylation of aspartate and asparagine is (R) stereospecific within EGF domains.</text>
</comment>
<comment type="similarity">
    <text evidence="4">Belongs to the peptidase S1 family.</text>
</comment>